<sequence>MPHLSKEAFKKQIKNGIIVSCQALPGEPLYTESGGVMPLLALAAQEAGAVGIRANSVRDIKEIQEVTNLPIIGIIKREYPPQEPFITATMTEVDQLASLDIAVIALDCTLRERHDGLSVAEFIQKIKRKYPEQLLMADISTFEEGKNAFEAGVDFVGTTLSGYTDYSRQEEGPDIELLNKLCQAGIDVIAEGKIHTPKQANEINHIGVAGIVVGGAITRPKEIAERFISGLS</sequence>
<protein>
    <recommendedName>
        <fullName evidence="1">Putative N-acetylmannosamine-6-phosphate 2-epimerase</fullName>
        <ecNumber evidence="1">5.1.3.9</ecNumber>
    </recommendedName>
    <alternativeName>
        <fullName evidence="1">ManNAc-6-P epimerase</fullName>
    </alternativeName>
</protein>
<proteinExistence type="inferred from homology"/>
<comment type="function">
    <text evidence="1">Converts N-acetylmannosamine-6-phosphate (ManNAc-6-P) to N-acetylglucosamine-6-phosphate (GlcNAc-6-P).</text>
</comment>
<comment type="catalytic activity">
    <reaction evidence="1">
        <text>an N-acyl-D-glucosamine 6-phosphate = an N-acyl-D-mannosamine 6-phosphate</text>
        <dbReference type="Rhea" id="RHEA:23932"/>
        <dbReference type="ChEBI" id="CHEBI:57599"/>
        <dbReference type="ChEBI" id="CHEBI:57666"/>
        <dbReference type="EC" id="5.1.3.9"/>
    </reaction>
</comment>
<comment type="pathway">
    <text evidence="1">Amino-sugar metabolism; N-acetylneuraminate degradation; D-fructose 6-phosphate from N-acetylneuraminate: step 3/5.</text>
</comment>
<comment type="similarity">
    <text evidence="1">Belongs to the NanE family.</text>
</comment>
<organism>
    <name type="scientific">Streptococcus agalactiae serotype Ia (strain ATCC 27591 / A909 / CDC SS700)</name>
    <dbReference type="NCBI Taxonomy" id="205921"/>
    <lineage>
        <taxon>Bacteria</taxon>
        <taxon>Bacillati</taxon>
        <taxon>Bacillota</taxon>
        <taxon>Bacilli</taxon>
        <taxon>Lactobacillales</taxon>
        <taxon>Streptococcaceae</taxon>
        <taxon>Streptococcus</taxon>
    </lineage>
</organism>
<dbReference type="EC" id="5.1.3.9" evidence="1"/>
<dbReference type="EMBL" id="CP000114">
    <property type="protein sequence ID" value="ABA46255.1"/>
    <property type="molecule type" value="Genomic_DNA"/>
</dbReference>
<dbReference type="RefSeq" id="WP_001120327.1">
    <property type="nucleotide sequence ID" value="NC_007432.1"/>
</dbReference>
<dbReference type="SMR" id="Q3K3Z4"/>
<dbReference type="KEGG" id="sak:SAK_0066"/>
<dbReference type="HOGENOM" id="CLU_086300_1_0_9"/>
<dbReference type="UniPathway" id="UPA00629">
    <property type="reaction ID" value="UER00682"/>
</dbReference>
<dbReference type="GO" id="GO:0005829">
    <property type="term" value="C:cytosol"/>
    <property type="evidence" value="ECO:0007669"/>
    <property type="project" value="TreeGrafter"/>
</dbReference>
<dbReference type="GO" id="GO:0047465">
    <property type="term" value="F:N-acylglucosamine-6-phosphate 2-epimerase activity"/>
    <property type="evidence" value="ECO:0007669"/>
    <property type="project" value="UniProtKB-EC"/>
</dbReference>
<dbReference type="GO" id="GO:0005975">
    <property type="term" value="P:carbohydrate metabolic process"/>
    <property type="evidence" value="ECO:0007669"/>
    <property type="project" value="UniProtKB-UniRule"/>
</dbReference>
<dbReference type="GO" id="GO:0006053">
    <property type="term" value="P:N-acetylmannosamine catabolic process"/>
    <property type="evidence" value="ECO:0007669"/>
    <property type="project" value="TreeGrafter"/>
</dbReference>
<dbReference type="GO" id="GO:0019262">
    <property type="term" value="P:N-acetylneuraminate catabolic process"/>
    <property type="evidence" value="ECO:0007669"/>
    <property type="project" value="UniProtKB-UniRule"/>
</dbReference>
<dbReference type="CDD" id="cd04729">
    <property type="entry name" value="NanE"/>
    <property type="match status" value="1"/>
</dbReference>
<dbReference type="FunFam" id="3.20.20.70:FF:000035">
    <property type="entry name" value="Putative N-acetylmannosamine-6-phosphate 2-epimerase"/>
    <property type="match status" value="1"/>
</dbReference>
<dbReference type="Gene3D" id="3.20.20.70">
    <property type="entry name" value="Aldolase class I"/>
    <property type="match status" value="1"/>
</dbReference>
<dbReference type="HAMAP" id="MF_01235">
    <property type="entry name" value="ManNAc6P_epimer"/>
    <property type="match status" value="1"/>
</dbReference>
<dbReference type="InterPro" id="IPR013785">
    <property type="entry name" value="Aldolase_TIM"/>
</dbReference>
<dbReference type="InterPro" id="IPR007260">
    <property type="entry name" value="NanE"/>
</dbReference>
<dbReference type="InterPro" id="IPR011060">
    <property type="entry name" value="RibuloseP-bd_barrel"/>
</dbReference>
<dbReference type="NCBIfam" id="NF002231">
    <property type="entry name" value="PRK01130.1"/>
    <property type="match status" value="1"/>
</dbReference>
<dbReference type="PANTHER" id="PTHR36204">
    <property type="entry name" value="N-ACETYLMANNOSAMINE-6-PHOSPHATE 2-EPIMERASE-RELATED"/>
    <property type="match status" value="1"/>
</dbReference>
<dbReference type="PANTHER" id="PTHR36204:SF1">
    <property type="entry name" value="N-ACETYLMANNOSAMINE-6-PHOSPHATE 2-EPIMERASE-RELATED"/>
    <property type="match status" value="1"/>
</dbReference>
<dbReference type="Pfam" id="PF04131">
    <property type="entry name" value="NanE"/>
    <property type="match status" value="1"/>
</dbReference>
<dbReference type="SUPFAM" id="SSF51366">
    <property type="entry name" value="Ribulose-phoshate binding barrel"/>
    <property type="match status" value="1"/>
</dbReference>
<accession>Q3K3Z4</accession>
<reference key="1">
    <citation type="journal article" date="2005" name="Proc. Natl. Acad. Sci. U.S.A.">
        <title>Genome analysis of multiple pathogenic isolates of Streptococcus agalactiae: implications for the microbial 'pan-genome'.</title>
        <authorList>
            <person name="Tettelin H."/>
            <person name="Masignani V."/>
            <person name="Cieslewicz M.J."/>
            <person name="Donati C."/>
            <person name="Medini D."/>
            <person name="Ward N.L."/>
            <person name="Angiuoli S.V."/>
            <person name="Crabtree J."/>
            <person name="Jones A.L."/>
            <person name="Durkin A.S."/>
            <person name="DeBoy R.T."/>
            <person name="Davidsen T.M."/>
            <person name="Mora M."/>
            <person name="Scarselli M."/>
            <person name="Margarit y Ros I."/>
            <person name="Peterson J.D."/>
            <person name="Hauser C.R."/>
            <person name="Sundaram J.P."/>
            <person name="Nelson W.C."/>
            <person name="Madupu R."/>
            <person name="Brinkac L.M."/>
            <person name="Dodson R.J."/>
            <person name="Rosovitz M.J."/>
            <person name="Sullivan S.A."/>
            <person name="Daugherty S.C."/>
            <person name="Haft D.H."/>
            <person name="Selengut J."/>
            <person name="Gwinn M.L."/>
            <person name="Zhou L."/>
            <person name="Zafar N."/>
            <person name="Khouri H."/>
            <person name="Radune D."/>
            <person name="Dimitrov G."/>
            <person name="Watkins K."/>
            <person name="O'Connor K.J."/>
            <person name="Smith S."/>
            <person name="Utterback T.R."/>
            <person name="White O."/>
            <person name="Rubens C.E."/>
            <person name="Grandi G."/>
            <person name="Madoff L.C."/>
            <person name="Kasper D.L."/>
            <person name="Telford J.L."/>
            <person name="Wessels M.R."/>
            <person name="Rappuoli R."/>
            <person name="Fraser C.M."/>
        </authorList>
    </citation>
    <scope>NUCLEOTIDE SEQUENCE [LARGE SCALE GENOMIC DNA]</scope>
    <source>
        <strain>ATCC 27591 / A909 / CDC SS700</strain>
    </source>
</reference>
<name>NANE_STRA1</name>
<keyword id="KW-0119">Carbohydrate metabolism</keyword>
<keyword id="KW-0413">Isomerase</keyword>
<gene>
    <name evidence="1" type="primary">nanE</name>
    <name type="ordered locus">SAK_0066</name>
</gene>
<feature type="chain" id="PRO_0000301489" description="Putative N-acetylmannosamine-6-phosphate 2-epimerase">
    <location>
        <begin position="1"/>
        <end position="232"/>
    </location>
</feature>
<evidence type="ECO:0000255" key="1">
    <source>
        <dbReference type="HAMAP-Rule" id="MF_01235"/>
    </source>
</evidence>